<keyword id="KW-0150">Chloroplast</keyword>
<keyword id="KW-0934">Plastid</keyword>
<keyword id="KW-0687">Ribonucleoprotein</keyword>
<keyword id="KW-0689">Ribosomal protein</keyword>
<dbReference type="EMBL" id="AY582139">
    <property type="protein sequence ID" value="AAT98498.1"/>
    <property type="molecule type" value="Genomic_DNA"/>
</dbReference>
<dbReference type="RefSeq" id="YP_086955.1">
    <property type="nucleotide sequence ID" value="NC_006290.1"/>
</dbReference>
<dbReference type="SMR" id="Q68S17"/>
<dbReference type="GeneID" id="3021506"/>
<dbReference type="GO" id="GO:0009507">
    <property type="term" value="C:chloroplast"/>
    <property type="evidence" value="ECO:0007669"/>
    <property type="project" value="UniProtKB-SubCell"/>
</dbReference>
<dbReference type="GO" id="GO:0005763">
    <property type="term" value="C:mitochondrial small ribosomal subunit"/>
    <property type="evidence" value="ECO:0007669"/>
    <property type="project" value="TreeGrafter"/>
</dbReference>
<dbReference type="GO" id="GO:0003735">
    <property type="term" value="F:structural constituent of ribosome"/>
    <property type="evidence" value="ECO:0007669"/>
    <property type="project" value="InterPro"/>
</dbReference>
<dbReference type="GO" id="GO:0006412">
    <property type="term" value="P:translation"/>
    <property type="evidence" value="ECO:0007669"/>
    <property type="project" value="UniProtKB-UniRule"/>
</dbReference>
<dbReference type="CDD" id="cd01425">
    <property type="entry name" value="RPS2"/>
    <property type="match status" value="1"/>
</dbReference>
<dbReference type="FunFam" id="3.40.50.10490:FF:000101">
    <property type="match status" value="1"/>
</dbReference>
<dbReference type="FunFam" id="1.10.287.610:FF:000001">
    <property type="entry name" value="30S ribosomal protein S2"/>
    <property type="match status" value="1"/>
</dbReference>
<dbReference type="Gene3D" id="3.40.50.10490">
    <property type="entry name" value="Glucose-6-phosphate isomerase like protein, domain 1"/>
    <property type="match status" value="1"/>
</dbReference>
<dbReference type="Gene3D" id="1.10.287.610">
    <property type="entry name" value="Helix hairpin bin"/>
    <property type="match status" value="1"/>
</dbReference>
<dbReference type="HAMAP" id="MF_00291_B">
    <property type="entry name" value="Ribosomal_uS2_B"/>
    <property type="match status" value="1"/>
</dbReference>
<dbReference type="InterPro" id="IPR001865">
    <property type="entry name" value="Ribosomal_uS2"/>
</dbReference>
<dbReference type="InterPro" id="IPR005706">
    <property type="entry name" value="Ribosomal_uS2_bac/mit/plastid"/>
</dbReference>
<dbReference type="InterPro" id="IPR018130">
    <property type="entry name" value="Ribosomal_uS2_CS"/>
</dbReference>
<dbReference type="InterPro" id="IPR023591">
    <property type="entry name" value="Ribosomal_uS2_flav_dom_sf"/>
</dbReference>
<dbReference type="NCBIfam" id="TIGR01011">
    <property type="entry name" value="rpsB_bact"/>
    <property type="match status" value="1"/>
</dbReference>
<dbReference type="PANTHER" id="PTHR12534">
    <property type="entry name" value="30S RIBOSOMAL PROTEIN S2 PROKARYOTIC AND ORGANELLAR"/>
    <property type="match status" value="1"/>
</dbReference>
<dbReference type="PANTHER" id="PTHR12534:SF0">
    <property type="entry name" value="SMALL RIBOSOMAL SUBUNIT PROTEIN US2M"/>
    <property type="match status" value="1"/>
</dbReference>
<dbReference type="Pfam" id="PF00318">
    <property type="entry name" value="Ribosomal_S2"/>
    <property type="match status" value="1"/>
</dbReference>
<dbReference type="PRINTS" id="PR00395">
    <property type="entry name" value="RIBOSOMALS2"/>
</dbReference>
<dbReference type="SUPFAM" id="SSF52313">
    <property type="entry name" value="Ribosomal protein S2"/>
    <property type="match status" value="1"/>
</dbReference>
<dbReference type="PROSITE" id="PS00962">
    <property type="entry name" value="RIBOSOMAL_S2_1"/>
    <property type="match status" value="1"/>
</dbReference>
<dbReference type="PROSITE" id="PS00963">
    <property type="entry name" value="RIBOSOMAL_S2_2"/>
    <property type="match status" value="1"/>
</dbReference>
<name>RR2_PANGI</name>
<geneLocation type="chloroplast"/>
<reference key="1">
    <citation type="journal article" date="2004" name="DNA Res.">
        <title>Complete chloroplast genome sequence from Korea ginseng (Panax schinseng Nees) and comparative analysis of sequence evolution among 17 vascular plants.</title>
        <authorList>
            <person name="Kim K.-J."/>
            <person name="Lee H.-L."/>
        </authorList>
    </citation>
    <scope>NUCLEOTIDE SEQUENCE [LARGE SCALE GENOMIC DNA]</scope>
</reference>
<comment type="subcellular location">
    <subcellularLocation>
        <location>Plastid</location>
        <location>Chloroplast</location>
    </subcellularLocation>
</comment>
<comment type="similarity">
    <text evidence="1">Belongs to the universal ribosomal protein uS2 family.</text>
</comment>
<feature type="chain" id="PRO_0000352145" description="Small ribosomal subunit protein uS2c">
    <location>
        <begin position="1"/>
        <end position="236"/>
    </location>
</feature>
<gene>
    <name type="primary">rps2</name>
    <name type="ORF">PSC0169</name>
</gene>
<evidence type="ECO:0000305" key="1"/>
<accession>Q68S17</accession>
<organism>
    <name type="scientific">Panax ginseng</name>
    <name type="common">Korean ginseng</name>
    <dbReference type="NCBI Taxonomy" id="4054"/>
    <lineage>
        <taxon>Eukaryota</taxon>
        <taxon>Viridiplantae</taxon>
        <taxon>Streptophyta</taxon>
        <taxon>Embryophyta</taxon>
        <taxon>Tracheophyta</taxon>
        <taxon>Spermatophyta</taxon>
        <taxon>Magnoliopsida</taxon>
        <taxon>eudicotyledons</taxon>
        <taxon>Gunneridae</taxon>
        <taxon>Pentapetalae</taxon>
        <taxon>asterids</taxon>
        <taxon>campanulids</taxon>
        <taxon>Apiales</taxon>
        <taxon>Araliaceae</taxon>
        <taxon>Panax</taxon>
    </lineage>
</organism>
<protein>
    <recommendedName>
        <fullName evidence="1">Small ribosomal subunit protein uS2c</fullName>
    </recommendedName>
    <alternativeName>
        <fullName>30S ribosomal protein S2, chloroplastic</fullName>
    </alternativeName>
</protein>
<proteinExistence type="inferred from homology"/>
<sequence length="236" mass="26828">MTKRYWNINLEEMMKAGVHFGHGTKKWNPKMAPYISAKRKGIHITNLTRTARFLLEACDLVFDAASRGKQFLIVGTKNKAANLVAWAAIKARCHYVNKKWLGGMLTNWSTTETRLHKFRDLRTEQKTGRLNRLPKRDAAMLKRQLSHLQTYLGGIKYMTGLPDIVIIVDQHEEYTALRECITLGIPTICLIDTNCDPDLADISIPANDDAISSIRLILNKLVFAICEGRSSYIRNP</sequence>